<evidence type="ECO:0000255" key="1">
    <source>
        <dbReference type="HAMAP-Rule" id="MF_01022"/>
    </source>
</evidence>
<reference key="1">
    <citation type="journal article" date="2002" name="Nat. Biotechnol.">
        <title>Genome sequence of the dissimilatory metal ion-reducing bacterium Shewanella oneidensis.</title>
        <authorList>
            <person name="Heidelberg J.F."/>
            <person name="Paulsen I.T."/>
            <person name="Nelson K.E."/>
            <person name="Gaidos E.J."/>
            <person name="Nelson W.C."/>
            <person name="Read T.D."/>
            <person name="Eisen J.A."/>
            <person name="Seshadri R."/>
            <person name="Ward N.L."/>
            <person name="Methe B.A."/>
            <person name="Clayton R.A."/>
            <person name="Meyer T."/>
            <person name="Tsapin A."/>
            <person name="Scott J."/>
            <person name="Beanan M.J."/>
            <person name="Brinkac L.M."/>
            <person name="Daugherty S.C."/>
            <person name="DeBoy R.T."/>
            <person name="Dodson R.J."/>
            <person name="Durkin A.S."/>
            <person name="Haft D.H."/>
            <person name="Kolonay J.F."/>
            <person name="Madupu R."/>
            <person name="Peterson J.D."/>
            <person name="Umayam L.A."/>
            <person name="White O."/>
            <person name="Wolf A.M."/>
            <person name="Vamathevan J.J."/>
            <person name="Weidman J.F."/>
            <person name="Impraim M."/>
            <person name="Lee K."/>
            <person name="Berry K.J."/>
            <person name="Lee C."/>
            <person name="Mueller J."/>
            <person name="Khouri H.M."/>
            <person name="Gill J."/>
            <person name="Utterback T.R."/>
            <person name="McDonald L.A."/>
            <person name="Feldblyum T.V."/>
            <person name="Smith H.O."/>
            <person name="Venter J.C."/>
            <person name="Nealson K.H."/>
            <person name="Fraser C.M."/>
        </authorList>
    </citation>
    <scope>NUCLEOTIDE SEQUENCE [LARGE SCALE GENOMIC DNA]</scope>
    <source>
        <strain>ATCC 700550 / JCM 31522 / CIP 106686 / LMG 19005 / NCIMB 14063 / MR-1</strain>
    </source>
</reference>
<protein>
    <recommendedName>
        <fullName evidence="1">Histidine biosynthesis bifunctional protein HisB</fullName>
    </recommendedName>
    <domain>
        <recommendedName>
            <fullName evidence="1">Histidinol-phosphatase</fullName>
            <ecNumber evidence="1">3.1.3.15</ecNumber>
        </recommendedName>
    </domain>
    <domain>
        <recommendedName>
            <fullName evidence="1">Imidazoleglycerol-phosphate dehydratase</fullName>
            <shortName evidence="1">IGPD</shortName>
            <ecNumber evidence="1">4.2.1.19</ecNumber>
        </recommendedName>
    </domain>
</protein>
<proteinExistence type="inferred from homology"/>
<dbReference type="EC" id="3.1.3.15" evidence="1"/>
<dbReference type="EC" id="4.2.1.19" evidence="1"/>
<dbReference type="EMBL" id="AE014299">
    <property type="protein sequence ID" value="AAN55118.1"/>
    <property type="molecule type" value="Genomic_DNA"/>
</dbReference>
<dbReference type="RefSeq" id="NP_717674.1">
    <property type="nucleotide sequence ID" value="NC_004347.2"/>
</dbReference>
<dbReference type="RefSeq" id="WP_011072138.1">
    <property type="nucleotide sequence ID" value="NC_004347.2"/>
</dbReference>
<dbReference type="SMR" id="Q8EFB3"/>
<dbReference type="STRING" id="211586.SO_2071"/>
<dbReference type="PaxDb" id="211586-SO_2071"/>
<dbReference type="KEGG" id="son:SO_2071"/>
<dbReference type="PATRIC" id="fig|211586.12.peg.1989"/>
<dbReference type="eggNOG" id="COG0131">
    <property type="taxonomic scope" value="Bacteria"/>
</dbReference>
<dbReference type="eggNOG" id="COG0241">
    <property type="taxonomic scope" value="Bacteria"/>
</dbReference>
<dbReference type="HOGENOM" id="CLU_044308_0_0_6"/>
<dbReference type="OrthoDB" id="9790411at2"/>
<dbReference type="PhylomeDB" id="Q8EFB3"/>
<dbReference type="BioCyc" id="SONE211586:G1GMP-1904-MONOMER"/>
<dbReference type="UniPathway" id="UPA00031">
    <property type="reaction ID" value="UER00011"/>
</dbReference>
<dbReference type="UniPathway" id="UPA00031">
    <property type="reaction ID" value="UER00013"/>
</dbReference>
<dbReference type="Proteomes" id="UP000008186">
    <property type="component" value="Chromosome"/>
</dbReference>
<dbReference type="GO" id="GO:0005737">
    <property type="term" value="C:cytoplasm"/>
    <property type="evidence" value="ECO:0007669"/>
    <property type="project" value="UniProtKB-SubCell"/>
</dbReference>
<dbReference type="GO" id="GO:0004401">
    <property type="term" value="F:histidinol-phosphatase activity"/>
    <property type="evidence" value="ECO:0007669"/>
    <property type="project" value="UniProtKB-UniRule"/>
</dbReference>
<dbReference type="GO" id="GO:0004424">
    <property type="term" value="F:imidazoleglycerol-phosphate dehydratase activity"/>
    <property type="evidence" value="ECO:0000318"/>
    <property type="project" value="GO_Central"/>
</dbReference>
<dbReference type="GO" id="GO:0046872">
    <property type="term" value="F:metal ion binding"/>
    <property type="evidence" value="ECO:0007669"/>
    <property type="project" value="UniProtKB-KW"/>
</dbReference>
<dbReference type="GO" id="GO:0000105">
    <property type="term" value="P:L-histidine biosynthetic process"/>
    <property type="evidence" value="ECO:0000318"/>
    <property type="project" value="GO_Central"/>
</dbReference>
<dbReference type="CDD" id="cd07503">
    <property type="entry name" value="HAD_HisB-N"/>
    <property type="match status" value="1"/>
</dbReference>
<dbReference type="CDD" id="cd07914">
    <property type="entry name" value="IGPD"/>
    <property type="match status" value="1"/>
</dbReference>
<dbReference type="FunFam" id="3.40.50.1000:FF:000061">
    <property type="entry name" value="Histidine biosynthesis bifunctional protein HisB"/>
    <property type="match status" value="1"/>
</dbReference>
<dbReference type="FunFam" id="3.30.230.40:FF:000001">
    <property type="entry name" value="Imidazoleglycerol-phosphate dehydratase HisB"/>
    <property type="match status" value="1"/>
</dbReference>
<dbReference type="FunFam" id="3.30.230.40:FF:000003">
    <property type="entry name" value="Imidazoleglycerol-phosphate dehydratase HisB"/>
    <property type="match status" value="1"/>
</dbReference>
<dbReference type="Gene3D" id="3.40.50.1000">
    <property type="entry name" value="HAD superfamily/HAD-like"/>
    <property type="match status" value="1"/>
</dbReference>
<dbReference type="Gene3D" id="3.30.230.40">
    <property type="entry name" value="Imidazole glycerol phosphate dehydratase, domain 1"/>
    <property type="match status" value="2"/>
</dbReference>
<dbReference type="HAMAP" id="MF_01022">
    <property type="entry name" value="Bifunc_HisB"/>
    <property type="match status" value="1"/>
</dbReference>
<dbReference type="HAMAP" id="MF_00076">
    <property type="entry name" value="HisB"/>
    <property type="match status" value="1"/>
</dbReference>
<dbReference type="InterPro" id="IPR036412">
    <property type="entry name" value="HAD-like_sf"/>
</dbReference>
<dbReference type="InterPro" id="IPR006549">
    <property type="entry name" value="HAD-SF_hydro_IIIA"/>
</dbReference>
<dbReference type="InterPro" id="IPR023214">
    <property type="entry name" value="HAD_sf"/>
</dbReference>
<dbReference type="InterPro" id="IPR020566">
    <property type="entry name" value="His_synth_bifunc_HisB"/>
</dbReference>
<dbReference type="InterPro" id="IPR005954">
    <property type="entry name" value="HisB_N"/>
</dbReference>
<dbReference type="InterPro" id="IPR006543">
    <property type="entry name" value="Histidinol-phos"/>
</dbReference>
<dbReference type="InterPro" id="IPR038494">
    <property type="entry name" value="IGPD_sf"/>
</dbReference>
<dbReference type="InterPro" id="IPR000807">
    <property type="entry name" value="ImidazoleglycerolP_deHydtase"/>
</dbReference>
<dbReference type="InterPro" id="IPR020565">
    <property type="entry name" value="ImidazoleglycerP_deHydtase_CS"/>
</dbReference>
<dbReference type="InterPro" id="IPR013954">
    <property type="entry name" value="PNK3P"/>
</dbReference>
<dbReference type="InterPro" id="IPR020568">
    <property type="entry name" value="Ribosomal_Su5_D2-typ_SF"/>
</dbReference>
<dbReference type="NCBIfam" id="TIGR01662">
    <property type="entry name" value="HAD-SF-IIIA"/>
    <property type="match status" value="1"/>
</dbReference>
<dbReference type="NCBIfam" id="TIGR01261">
    <property type="entry name" value="hisB_Nterm"/>
    <property type="match status" value="1"/>
</dbReference>
<dbReference type="NCBIfam" id="TIGR01656">
    <property type="entry name" value="Histidinol-ppas"/>
    <property type="match status" value="1"/>
</dbReference>
<dbReference type="NCBIfam" id="NF002111">
    <property type="entry name" value="PRK00951.2-1"/>
    <property type="match status" value="1"/>
</dbReference>
<dbReference type="NCBIfam" id="NF003937">
    <property type="entry name" value="PRK05446.1"/>
    <property type="match status" value="1"/>
</dbReference>
<dbReference type="PANTHER" id="PTHR23133:SF2">
    <property type="entry name" value="IMIDAZOLEGLYCEROL-PHOSPHATE DEHYDRATASE"/>
    <property type="match status" value="1"/>
</dbReference>
<dbReference type="PANTHER" id="PTHR23133">
    <property type="entry name" value="IMIDAZOLEGLYCEROL-PHOSPHATE DEHYDRATASE HIS7"/>
    <property type="match status" value="1"/>
</dbReference>
<dbReference type="Pfam" id="PF00475">
    <property type="entry name" value="IGPD"/>
    <property type="match status" value="1"/>
</dbReference>
<dbReference type="Pfam" id="PF08645">
    <property type="entry name" value="PNK3P"/>
    <property type="match status" value="1"/>
</dbReference>
<dbReference type="SUPFAM" id="SSF56784">
    <property type="entry name" value="HAD-like"/>
    <property type="match status" value="1"/>
</dbReference>
<dbReference type="SUPFAM" id="SSF54211">
    <property type="entry name" value="Ribosomal protein S5 domain 2-like"/>
    <property type="match status" value="2"/>
</dbReference>
<dbReference type="PROSITE" id="PS00954">
    <property type="entry name" value="IGP_DEHYDRATASE_1"/>
    <property type="match status" value="1"/>
</dbReference>
<dbReference type="PROSITE" id="PS00955">
    <property type="entry name" value="IGP_DEHYDRATASE_2"/>
    <property type="match status" value="1"/>
</dbReference>
<organism>
    <name type="scientific">Shewanella oneidensis (strain ATCC 700550 / JCM 31522 / CIP 106686 / LMG 19005 / NCIMB 14063 / MR-1)</name>
    <dbReference type="NCBI Taxonomy" id="211586"/>
    <lineage>
        <taxon>Bacteria</taxon>
        <taxon>Pseudomonadati</taxon>
        <taxon>Pseudomonadota</taxon>
        <taxon>Gammaproteobacteria</taxon>
        <taxon>Alteromonadales</taxon>
        <taxon>Shewanellaceae</taxon>
        <taxon>Shewanella</taxon>
    </lineage>
</organism>
<comment type="catalytic activity">
    <reaction evidence="1">
        <text>D-erythro-1-(imidazol-4-yl)glycerol 3-phosphate = 3-(imidazol-4-yl)-2-oxopropyl phosphate + H2O</text>
        <dbReference type="Rhea" id="RHEA:11040"/>
        <dbReference type="ChEBI" id="CHEBI:15377"/>
        <dbReference type="ChEBI" id="CHEBI:57766"/>
        <dbReference type="ChEBI" id="CHEBI:58278"/>
        <dbReference type="EC" id="4.2.1.19"/>
    </reaction>
</comment>
<comment type="catalytic activity">
    <reaction evidence="1">
        <text>L-histidinol phosphate + H2O = L-histidinol + phosphate</text>
        <dbReference type="Rhea" id="RHEA:14465"/>
        <dbReference type="ChEBI" id="CHEBI:15377"/>
        <dbReference type="ChEBI" id="CHEBI:43474"/>
        <dbReference type="ChEBI" id="CHEBI:57699"/>
        <dbReference type="ChEBI" id="CHEBI:57980"/>
        <dbReference type="EC" id="3.1.3.15"/>
    </reaction>
</comment>
<comment type="cofactor">
    <cofactor evidence="1">
        <name>Mg(2+)</name>
        <dbReference type="ChEBI" id="CHEBI:18420"/>
    </cofactor>
</comment>
<comment type="cofactor">
    <cofactor evidence="1">
        <name>Zn(2+)</name>
        <dbReference type="ChEBI" id="CHEBI:29105"/>
    </cofactor>
</comment>
<comment type="pathway">
    <text evidence="1">Amino-acid biosynthesis; L-histidine biosynthesis; L-histidine from 5-phospho-alpha-D-ribose 1-diphosphate: step 6/9.</text>
</comment>
<comment type="pathway">
    <text evidence="1">Amino-acid biosynthesis; L-histidine biosynthesis; L-histidine from 5-phospho-alpha-D-ribose 1-diphosphate: step 8/9.</text>
</comment>
<comment type="subcellular location">
    <subcellularLocation>
        <location evidence="1">Cytoplasm</location>
    </subcellularLocation>
</comment>
<comment type="similarity">
    <text evidence="1">In the N-terminal section; belongs to the histidinol-phosphatase family.</text>
</comment>
<comment type="similarity">
    <text evidence="1">In the C-terminal section; belongs to the imidazoleglycerol-phosphate dehydratase family.</text>
</comment>
<feature type="chain" id="PRO_0000158221" description="Histidine biosynthesis bifunctional protein HisB">
    <location>
        <begin position="1"/>
        <end position="363"/>
    </location>
</feature>
<feature type="region of interest" description="Histidinol-phosphatase" evidence="1">
    <location>
        <begin position="1"/>
        <end position="174"/>
    </location>
</feature>
<feature type="region of interest" description="Imidazoleglycerol-phosphate dehydratase" evidence="1">
    <location>
        <begin position="175"/>
        <end position="363"/>
    </location>
</feature>
<feature type="active site" description="Nucleophile" evidence="1">
    <location>
        <position position="17"/>
    </location>
</feature>
<feature type="active site" description="Proton donor" evidence="1">
    <location>
        <position position="19"/>
    </location>
</feature>
<feature type="binding site" evidence="1">
    <location>
        <position position="17"/>
    </location>
    <ligand>
        <name>Mg(2+)</name>
        <dbReference type="ChEBI" id="CHEBI:18420"/>
    </ligand>
</feature>
<feature type="binding site" evidence="1">
    <location>
        <position position="19"/>
    </location>
    <ligand>
        <name>Mg(2+)</name>
        <dbReference type="ChEBI" id="CHEBI:18420"/>
    </ligand>
</feature>
<feature type="binding site" evidence="1">
    <location>
        <position position="101"/>
    </location>
    <ligand>
        <name>Zn(2+)</name>
        <dbReference type="ChEBI" id="CHEBI:29105"/>
    </ligand>
</feature>
<feature type="binding site" evidence="1">
    <location>
        <position position="103"/>
    </location>
    <ligand>
        <name>Zn(2+)</name>
        <dbReference type="ChEBI" id="CHEBI:29105"/>
    </ligand>
</feature>
<feature type="binding site" evidence="1">
    <location>
        <position position="109"/>
    </location>
    <ligand>
        <name>Zn(2+)</name>
        <dbReference type="ChEBI" id="CHEBI:29105"/>
    </ligand>
</feature>
<feature type="binding site" evidence="1">
    <location>
        <position position="111"/>
    </location>
    <ligand>
        <name>Zn(2+)</name>
        <dbReference type="ChEBI" id="CHEBI:29105"/>
    </ligand>
</feature>
<feature type="binding site" evidence="1">
    <location>
        <position position="138"/>
    </location>
    <ligand>
        <name>Mg(2+)</name>
        <dbReference type="ChEBI" id="CHEBI:18420"/>
    </ligand>
</feature>
<gene>
    <name evidence="1" type="primary">hisB</name>
    <name type="ordered locus">SO_2071</name>
</gene>
<name>HIS7_SHEON</name>
<accession>Q8EFB3</accession>
<sequence>MNPVFTPNVAQKILFIDRDGTLIEEPVTDKQVDNLAKLVFEPQVIPALLRLQKAGFRLVMVSNQDGLGTPSFPQEDFDAPHNMMMQILSSQGVKFEDVLICPHFNDENCSCRKPKLGLVKDFLTQGFIDFTQSAVIGDRHTDVELGNAMGIISFQYQRGSLGWNAIADALLNKGRSATVVRTTKETDIRVTVDLDNASKGTINTGIGFFDHMLDQIATHGNFKMEVNVDGDLEIDDHHSVEDTALAIGDALRQALGDKRGIARFGFSLPMDEAKGECLLDLSGRPFIKFAAQFEREKVGEMATEMVPHFFRSFADGLRCTLHVAAEGDNDHHKVEALFKVLGRALRQAVKVEGDVLPSSKGVL</sequence>
<keyword id="KW-0028">Amino-acid biosynthesis</keyword>
<keyword id="KW-0963">Cytoplasm</keyword>
<keyword id="KW-0368">Histidine biosynthesis</keyword>
<keyword id="KW-0378">Hydrolase</keyword>
<keyword id="KW-0456">Lyase</keyword>
<keyword id="KW-0460">Magnesium</keyword>
<keyword id="KW-0479">Metal-binding</keyword>
<keyword id="KW-0511">Multifunctional enzyme</keyword>
<keyword id="KW-1185">Reference proteome</keyword>
<keyword id="KW-0862">Zinc</keyword>